<organism>
    <name type="scientific">Frankia alni (strain DSM 45986 / CECT 9034 / ACN14a)</name>
    <dbReference type="NCBI Taxonomy" id="326424"/>
    <lineage>
        <taxon>Bacteria</taxon>
        <taxon>Bacillati</taxon>
        <taxon>Actinomycetota</taxon>
        <taxon>Actinomycetes</taxon>
        <taxon>Frankiales</taxon>
        <taxon>Frankiaceae</taxon>
        <taxon>Frankia</taxon>
    </lineage>
</organism>
<accession>Q0RRQ6</accession>
<keyword id="KW-1185">Reference proteome</keyword>
<keyword id="KW-0687">Ribonucleoprotein</keyword>
<keyword id="KW-0689">Ribosomal protein</keyword>
<keyword id="KW-0694">RNA-binding</keyword>
<keyword id="KW-0699">rRNA-binding</keyword>
<feature type="chain" id="PRO_1000055231" description="Large ribosomal subunit protein uL6">
    <location>
        <begin position="1"/>
        <end position="178"/>
    </location>
</feature>
<gene>
    <name evidence="1" type="primary">rplF</name>
    <name type="ordered locus">FRAAL1096</name>
</gene>
<reference key="1">
    <citation type="journal article" date="2007" name="Genome Res.">
        <title>Genome characteristics of facultatively symbiotic Frankia sp. strains reflect host range and host plant biogeography.</title>
        <authorList>
            <person name="Normand P."/>
            <person name="Lapierre P."/>
            <person name="Tisa L.S."/>
            <person name="Gogarten J.P."/>
            <person name="Alloisio N."/>
            <person name="Bagnarol E."/>
            <person name="Bassi C.A."/>
            <person name="Berry A.M."/>
            <person name="Bickhart D.M."/>
            <person name="Choisne N."/>
            <person name="Couloux A."/>
            <person name="Cournoyer B."/>
            <person name="Cruveiller S."/>
            <person name="Daubin V."/>
            <person name="Demange N."/>
            <person name="Francino M.P."/>
            <person name="Goltsman E."/>
            <person name="Huang Y."/>
            <person name="Kopp O.R."/>
            <person name="Labarre L."/>
            <person name="Lapidus A."/>
            <person name="Lavire C."/>
            <person name="Marechal J."/>
            <person name="Martinez M."/>
            <person name="Mastronunzio J.E."/>
            <person name="Mullin B.C."/>
            <person name="Niemann J."/>
            <person name="Pujic P."/>
            <person name="Rawnsley T."/>
            <person name="Rouy Z."/>
            <person name="Schenowitz C."/>
            <person name="Sellstedt A."/>
            <person name="Tavares F."/>
            <person name="Tomkins J.P."/>
            <person name="Vallenet D."/>
            <person name="Valverde C."/>
            <person name="Wall L.G."/>
            <person name="Wang Y."/>
            <person name="Medigue C."/>
            <person name="Benson D.R."/>
        </authorList>
    </citation>
    <scope>NUCLEOTIDE SEQUENCE [LARGE SCALE GENOMIC DNA]</scope>
    <source>
        <strain>DSM 45986 / CECT 9034 / ACN14a</strain>
    </source>
</reference>
<comment type="function">
    <text evidence="1">This protein binds to the 23S rRNA, and is important in its secondary structure. It is located near the subunit interface in the base of the L7/L12 stalk, and near the tRNA binding site of the peptidyltransferase center.</text>
</comment>
<comment type="subunit">
    <text evidence="1">Part of the 50S ribosomal subunit.</text>
</comment>
<comment type="similarity">
    <text evidence="1">Belongs to the universal ribosomal protein uL6 family.</text>
</comment>
<protein>
    <recommendedName>
        <fullName evidence="1">Large ribosomal subunit protein uL6</fullName>
    </recommendedName>
    <alternativeName>
        <fullName evidence="2">50S ribosomal protein L6</fullName>
    </alternativeName>
</protein>
<proteinExistence type="inferred from homology"/>
<evidence type="ECO:0000255" key="1">
    <source>
        <dbReference type="HAMAP-Rule" id="MF_01365"/>
    </source>
</evidence>
<evidence type="ECO:0000305" key="2"/>
<dbReference type="EMBL" id="CT573213">
    <property type="protein sequence ID" value="CAJ59761.1"/>
    <property type="molecule type" value="Genomic_DNA"/>
</dbReference>
<dbReference type="RefSeq" id="WP_011602310.1">
    <property type="nucleotide sequence ID" value="NC_008278.1"/>
</dbReference>
<dbReference type="SMR" id="Q0RRQ6"/>
<dbReference type="STRING" id="326424.FRAAL1096"/>
<dbReference type="KEGG" id="fal:FRAAL1096"/>
<dbReference type="eggNOG" id="COG0097">
    <property type="taxonomic scope" value="Bacteria"/>
</dbReference>
<dbReference type="HOGENOM" id="CLU_065464_1_2_11"/>
<dbReference type="OrthoDB" id="9805007at2"/>
<dbReference type="Proteomes" id="UP000000657">
    <property type="component" value="Chromosome"/>
</dbReference>
<dbReference type="GO" id="GO:0022625">
    <property type="term" value="C:cytosolic large ribosomal subunit"/>
    <property type="evidence" value="ECO:0007669"/>
    <property type="project" value="TreeGrafter"/>
</dbReference>
<dbReference type="GO" id="GO:0019843">
    <property type="term" value="F:rRNA binding"/>
    <property type="evidence" value="ECO:0007669"/>
    <property type="project" value="UniProtKB-UniRule"/>
</dbReference>
<dbReference type="GO" id="GO:0003735">
    <property type="term" value="F:structural constituent of ribosome"/>
    <property type="evidence" value="ECO:0007669"/>
    <property type="project" value="InterPro"/>
</dbReference>
<dbReference type="GO" id="GO:0002181">
    <property type="term" value="P:cytoplasmic translation"/>
    <property type="evidence" value="ECO:0007669"/>
    <property type="project" value="TreeGrafter"/>
</dbReference>
<dbReference type="FunFam" id="3.90.930.12:FF:000001">
    <property type="entry name" value="50S ribosomal protein L6"/>
    <property type="match status" value="1"/>
</dbReference>
<dbReference type="FunFam" id="3.90.930.12:FF:000002">
    <property type="entry name" value="50S ribosomal protein L6"/>
    <property type="match status" value="1"/>
</dbReference>
<dbReference type="Gene3D" id="3.90.930.12">
    <property type="entry name" value="Ribosomal protein L6, alpha-beta domain"/>
    <property type="match status" value="2"/>
</dbReference>
<dbReference type="HAMAP" id="MF_01365_B">
    <property type="entry name" value="Ribosomal_uL6_B"/>
    <property type="match status" value="1"/>
</dbReference>
<dbReference type="InterPro" id="IPR000702">
    <property type="entry name" value="Ribosomal_uL6-like"/>
</dbReference>
<dbReference type="InterPro" id="IPR036789">
    <property type="entry name" value="Ribosomal_uL6-like_a/b-dom_sf"/>
</dbReference>
<dbReference type="InterPro" id="IPR020040">
    <property type="entry name" value="Ribosomal_uL6_a/b-dom"/>
</dbReference>
<dbReference type="InterPro" id="IPR019906">
    <property type="entry name" value="Ribosomal_uL6_bac-type"/>
</dbReference>
<dbReference type="InterPro" id="IPR002358">
    <property type="entry name" value="Ribosomal_uL6_CS"/>
</dbReference>
<dbReference type="NCBIfam" id="TIGR03654">
    <property type="entry name" value="L6_bact"/>
    <property type="match status" value="1"/>
</dbReference>
<dbReference type="PANTHER" id="PTHR11655">
    <property type="entry name" value="60S/50S RIBOSOMAL PROTEIN L6/L9"/>
    <property type="match status" value="1"/>
</dbReference>
<dbReference type="PANTHER" id="PTHR11655:SF14">
    <property type="entry name" value="LARGE RIBOSOMAL SUBUNIT PROTEIN UL6M"/>
    <property type="match status" value="1"/>
</dbReference>
<dbReference type="Pfam" id="PF00347">
    <property type="entry name" value="Ribosomal_L6"/>
    <property type="match status" value="2"/>
</dbReference>
<dbReference type="PIRSF" id="PIRSF002162">
    <property type="entry name" value="Ribosomal_L6"/>
    <property type="match status" value="1"/>
</dbReference>
<dbReference type="PRINTS" id="PR00059">
    <property type="entry name" value="RIBOSOMALL6"/>
</dbReference>
<dbReference type="SUPFAM" id="SSF56053">
    <property type="entry name" value="Ribosomal protein L6"/>
    <property type="match status" value="2"/>
</dbReference>
<dbReference type="PROSITE" id="PS00525">
    <property type="entry name" value="RIBOSOMAL_L6_1"/>
    <property type="match status" value="1"/>
</dbReference>
<name>RL6_FRAAA</name>
<sequence>MSRIGRLPIPVPSGVDITVEGATVTVKGPKGTLSHVVVEPIAVNREEGQLVVTRPDDERRSRSLHGLTRTLVSNMVTGVTAGYSKTLEIVGVGYRVQAKGSDLEFALGYSHPVPVKAPEGIRFEVQTPTRFVVHGIDKQLVGEVSAKIRGLRKPDPYKGKGVRYQGEVVRRKVGKTGK</sequence>